<feature type="chain" id="PRO_1000213262" description="ATP phosphoribosyltransferase">
    <location>
        <begin position="1"/>
        <end position="213"/>
    </location>
</feature>
<dbReference type="EC" id="2.4.2.17" evidence="1"/>
<dbReference type="EMBL" id="CP000806">
    <property type="protein sequence ID" value="ACB53597.1"/>
    <property type="molecule type" value="Genomic_DNA"/>
</dbReference>
<dbReference type="RefSeq" id="WP_009543681.1">
    <property type="nucleotide sequence ID" value="NC_010546.1"/>
</dbReference>
<dbReference type="SMR" id="B1WSL8"/>
<dbReference type="STRING" id="43989.cce_4249"/>
<dbReference type="KEGG" id="cyt:cce_4249"/>
<dbReference type="eggNOG" id="COG0040">
    <property type="taxonomic scope" value="Bacteria"/>
</dbReference>
<dbReference type="HOGENOM" id="CLU_038115_2_0_3"/>
<dbReference type="OrthoDB" id="9801867at2"/>
<dbReference type="UniPathway" id="UPA00031">
    <property type="reaction ID" value="UER00006"/>
</dbReference>
<dbReference type="Proteomes" id="UP000001203">
    <property type="component" value="Chromosome circular"/>
</dbReference>
<dbReference type="GO" id="GO:0005737">
    <property type="term" value="C:cytoplasm"/>
    <property type="evidence" value="ECO:0007669"/>
    <property type="project" value="UniProtKB-SubCell"/>
</dbReference>
<dbReference type="GO" id="GO:0005524">
    <property type="term" value="F:ATP binding"/>
    <property type="evidence" value="ECO:0007669"/>
    <property type="project" value="UniProtKB-KW"/>
</dbReference>
<dbReference type="GO" id="GO:0003879">
    <property type="term" value="F:ATP phosphoribosyltransferase activity"/>
    <property type="evidence" value="ECO:0007669"/>
    <property type="project" value="UniProtKB-UniRule"/>
</dbReference>
<dbReference type="GO" id="GO:0000105">
    <property type="term" value="P:L-histidine biosynthetic process"/>
    <property type="evidence" value="ECO:0007669"/>
    <property type="project" value="UniProtKB-UniRule"/>
</dbReference>
<dbReference type="CDD" id="cd13595">
    <property type="entry name" value="PBP2_HisGs"/>
    <property type="match status" value="1"/>
</dbReference>
<dbReference type="FunFam" id="3.40.190.10:FF:000008">
    <property type="entry name" value="ATP phosphoribosyltransferase"/>
    <property type="match status" value="1"/>
</dbReference>
<dbReference type="Gene3D" id="3.40.190.10">
    <property type="entry name" value="Periplasmic binding protein-like II"/>
    <property type="match status" value="2"/>
</dbReference>
<dbReference type="HAMAP" id="MF_01018">
    <property type="entry name" value="HisG_Short"/>
    <property type="match status" value="1"/>
</dbReference>
<dbReference type="InterPro" id="IPR013820">
    <property type="entry name" value="ATP_PRibTrfase_cat"/>
</dbReference>
<dbReference type="InterPro" id="IPR018198">
    <property type="entry name" value="ATP_PRibTrfase_CS"/>
</dbReference>
<dbReference type="InterPro" id="IPR001348">
    <property type="entry name" value="ATP_PRibTrfase_HisG"/>
</dbReference>
<dbReference type="InterPro" id="IPR024893">
    <property type="entry name" value="ATP_PRibTrfase_HisG_short"/>
</dbReference>
<dbReference type="NCBIfam" id="TIGR00070">
    <property type="entry name" value="hisG"/>
    <property type="match status" value="1"/>
</dbReference>
<dbReference type="PANTHER" id="PTHR21403:SF8">
    <property type="entry name" value="ATP PHOSPHORIBOSYLTRANSFERASE"/>
    <property type="match status" value="1"/>
</dbReference>
<dbReference type="PANTHER" id="PTHR21403">
    <property type="entry name" value="ATP PHOSPHORIBOSYLTRANSFERASE ATP-PRTASE"/>
    <property type="match status" value="1"/>
</dbReference>
<dbReference type="Pfam" id="PF01634">
    <property type="entry name" value="HisG"/>
    <property type="match status" value="1"/>
</dbReference>
<dbReference type="SUPFAM" id="SSF53850">
    <property type="entry name" value="Periplasmic binding protein-like II"/>
    <property type="match status" value="1"/>
</dbReference>
<dbReference type="PROSITE" id="PS01316">
    <property type="entry name" value="ATP_P_PHORIBOSYLTR"/>
    <property type="match status" value="1"/>
</dbReference>
<gene>
    <name evidence="1" type="primary">hisG</name>
    <name type="ordered locus">cce_4249</name>
</gene>
<sequence length="213" mass="23189">MITIALPKGALLSDSIELFKRIGLDFSSFLDSKNRQLQIIDPTNTAQGLLVRATDVPVYVEYGQAQLGIVGYDLLLEKSPDVAHLADLNFGGCRMSVAVPKTSPYQTPAELPPNGKVASKFVNCAKTYFQQLDLPVEIIPLYGSVELGPITGMSEAIVDLVSTGRTLKENGLVEVETLFHSTARLIAHPLSYRLNLDNLNDLSEQIKNSVSKS</sequence>
<keyword id="KW-0028">Amino-acid biosynthesis</keyword>
<keyword id="KW-0067">ATP-binding</keyword>
<keyword id="KW-0963">Cytoplasm</keyword>
<keyword id="KW-0328">Glycosyltransferase</keyword>
<keyword id="KW-0368">Histidine biosynthesis</keyword>
<keyword id="KW-0547">Nucleotide-binding</keyword>
<keyword id="KW-1185">Reference proteome</keyword>
<keyword id="KW-0808">Transferase</keyword>
<organism>
    <name type="scientific">Crocosphaera subtropica (strain ATCC 51142 / BH68)</name>
    <name type="common">Cyanothece sp. (strain ATCC 51142)</name>
    <dbReference type="NCBI Taxonomy" id="43989"/>
    <lineage>
        <taxon>Bacteria</taxon>
        <taxon>Bacillati</taxon>
        <taxon>Cyanobacteriota</taxon>
        <taxon>Cyanophyceae</taxon>
        <taxon>Oscillatoriophycideae</taxon>
        <taxon>Chroococcales</taxon>
        <taxon>Aphanothecaceae</taxon>
        <taxon>Crocosphaera</taxon>
        <taxon>Crocosphaera subtropica</taxon>
    </lineage>
</organism>
<proteinExistence type="inferred from homology"/>
<comment type="function">
    <text evidence="1">Catalyzes the condensation of ATP and 5-phosphoribose 1-diphosphate to form N'-(5'-phosphoribosyl)-ATP (PR-ATP). Has a crucial role in the pathway because the rate of histidine biosynthesis seems to be controlled primarily by regulation of HisG enzymatic activity.</text>
</comment>
<comment type="catalytic activity">
    <reaction evidence="1">
        <text>1-(5-phospho-beta-D-ribosyl)-ATP + diphosphate = 5-phospho-alpha-D-ribose 1-diphosphate + ATP</text>
        <dbReference type="Rhea" id="RHEA:18473"/>
        <dbReference type="ChEBI" id="CHEBI:30616"/>
        <dbReference type="ChEBI" id="CHEBI:33019"/>
        <dbReference type="ChEBI" id="CHEBI:58017"/>
        <dbReference type="ChEBI" id="CHEBI:73183"/>
        <dbReference type="EC" id="2.4.2.17"/>
    </reaction>
</comment>
<comment type="pathway">
    <text evidence="1">Amino-acid biosynthesis; L-histidine biosynthesis; L-histidine from 5-phospho-alpha-D-ribose 1-diphosphate: step 1/9.</text>
</comment>
<comment type="subunit">
    <text evidence="1">Heteromultimer composed of HisG and HisZ subunits.</text>
</comment>
<comment type="subcellular location">
    <subcellularLocation>
        <location evidence="1">Cytoplasm</location>
    </subcellularLocation>
</comment>
<comment type="domain">
    <text>Lacks the C-terminal regulatory region which is replaced by HisZ.</text>
</comment>
<comment type="similarity">
    <text evidence="1">Belongs to the ATP phosphoribosyltransferase family. Short subfamily.</text>
</comment>
<evidence type="ECO:0000255" key="1">
    <source>
        <dbReference type="HAMAP-Rule" id="MF_01018"/>
    </source>
</evidence>
<reference key="1">
    <citation type="journal article" date="2008" name="Proc. Natl. Acad. Sci. U.S.A.">
        <title>The genome of Cyanothece 51142, a unicellular diazotrophic cyanobacterium important in the marine nitrogen cycle.</title>
        <authorList>
            <person name="Welsh E.A."/>
            <person name="Liberton M."/>
            <person name="Stoeckel J."/>
            <person name="Loh T."/>
            <person name="Elvitigala T."/>
            <person name="Wang C."/>
            <person name="Wollam A."/>
            <person name="Fulton R.S."/>
            <person name="Clifton S.W."/>
            <person name="Jacobs J.M."/>
            <person name="Aurora R."/>
            <person name="Ghosh B.K."/>
            <person name="Sherman L.A."/>
            <person name="Smith R.D."/>
            <person name="Wilson R.K."/>
            <person name="Pakrasi H.B."/>
        </authorList>
    </citation>
    <scope>NUCLEOTIDE SEQUENCE [LARGE SCALE GENOMIC DNA]</scope>
    <source>
        <strain>ATCC 51142 / BH68</strain>
    </source>
</reference>
<protein>
    <recommendedName>
        <fullName evidence="1">ATP phosphoribosyltransferase</fullName>
        <shortName evidence="1">ATP-PRT</shortName>
        <shortName evidence="1">ATP-PRTase</shortName>
        <ecNumber evidence="1">2.4.2.17</ecNumber>
    </recommendedName>
</protein>
<name>HIS1_CROS5</name>
<accession>B1WSL8</accession>